<keyword id="KW-0378">Hydrolase</keyword>
<keyword id="KW-0511">Multifunctional enzyme</keyword>
<keyword id="KW-0658">Purine biosynthesis</keyword>
<keyword id="KW-1185">Reference proteome</keyword>
<keyword id="KW-0808">Transferase</keyword>
<gene>
    <name evidence="1" type="primary">purH</name>
    <name type="ordered locus">RSc0504</name>
    <name type="ORF">RS05018</name>
</gene>
<name>PUR9_RALN1</name>
<evidence type="ECO:0000255" key="1">
    <source>
        <dbReference type="HAMAP-Rule" id="MF_00139"/>
    </source>
</evidence>
<evidence type="ECO:0000255" key="2">
    <source>
        <dbReference type="PROSITE-ProRule" id="PRU01202"/>
    </source>
</evidence>
<dbReference type="EC" id="2.1.2.3" evidence="1"/>
<dbReference type="EC" id="3.5.4.10" evidence="1"/>
<dbReference type="EMBL" id="AL646052">
    <property type="protein sequence ID" value="CAD14032.1"/>
    <property type="molecule type" value="Genomic_DNA"/>
</dbReference>
<dbReference type="RefSeq" id="WP_011000463.1">
    <property type="nucleotide sequence ID" value="NC_003295.1"/>
</dbReference>
<dbReference type="SMR" id="Q8Y232"/>
<dbReference type="STRING" id="267608.RSc0504"/>
<dbReference type="EnsemblBacteria" id="CAD14032">
    <property type="protein sequence ID" value="CAD14032"/>
    <property type="gene ID" value="RSc0504"/>
</dbReference>
<dbReference type="KEGG" id="rso:RSc0504"/>
<dbReference type="eggNOG" id="COG0138">
    <property type="taxonomic scope" value="Bacteria"/>
</dbReference>
<dbReference type="HOGENOM" id="CLU_016316_5_2_4"/>
<dbReference type="UniPathway" id="UPA00074">
    <property type="reaction ID" value="UER00133"/>
</dbReference>
<dbReference type="UniPathway" id="UPA00074">
    <property type="reaction ID" value="UER00135"/>
</dbReference>
<dbReference type="Proteomes" id="UP000001436">
    <property type="component" value="Chromosome"/>
</dbReference>
<dbReference type="GO" id="GO:0005829">
    <property type="term" value="C:cytosol"/>
    <property type="evidence" value="ECO:0007669"/>
    <property type="project" value="TreeGrafter"/>
</dbReference>
<dbReference type="GO" id="GO:0003937">
    <property type="term" value="F:IMP cyclohydrolase activity"/>
    <property type="evidence" value="ECO:0007669"/>
    <property type="project" value="UniProtKB-UniRule"/>
</dbReference>
<dbReference type="GO" id="GO:0004643">
    <property type="term" value="F:phosphoribosylaminoimidazolecarboxamide formyltransferase activity"/>
    <property type="evidence" value="ECO:0007669"/>
    <property type="project" value="UniProtKB-UniRule"/>
</dbReference>
<dbReference type="GO" id="GO:0006189">
    <property type="term" value="P:'de novo' IMP biosynthetic process"/>
    <property type="evidence" value="ECO:0007669"/>
    <property type="project" value="UniProtKB-UniRule"/>
</dbReference>
<dbReference type="CDD" id="cd01421">
    <property type="entry name" value="IMPCH"/>
    <property type="match status" value="1"/>
</dbReference>
<dbReference type="FunFam" id="3.40.140.20:FF:000001">
    <property type="entry name" value="Bifunctional purine biosynthesis protein PurH"/>
    <property type="match status" value="1"/>
</dbReference>
<dbReference type="FunFam" id="3.40.140.20:FF:000002">
    <property type="entry name" value="Bifunctional purine biosynthesis protein PurH"/>
    <property type="match status" value="1"/>
</dbReference>
<dbReference type="FunFam" id="3.40.50.1380:FF:000001">
    <property type="entry name" value="Bifunctional purine biosynthesis protein PurH"/>
    <property type="match status" value="1"/>
</dbReference>
<dbReference type="Gene3D" id="3.40.140.20">
    <property type="match status" value="2"/>
</dbReference>
<dbReference type="Gene3D" id="3.40.50.1380">
    <property type="entry name" value="Methylglyoxal synthase-like domain"/>
    <property type="match status" value="1"/>
</dbReference>
<dbReference type="HAMAP" id="MF_00139">
    <property type="entry name" value="PurH"/>
    <property type="match status" value="1"/>
</dbReference>
<dbReference type="InterPro" id="IPR024051">
    <property type="entry name" value="AICAR_Tfase_dup_dom_sf"/>
</dbReference>
<dbReference type="InterPro" id="IPR016193">
    <property type="entry name" value="Cytidine_deaminase-like"/>
</dbReference>
<dbReference type="InterPro" id="IPR011607">
    <property type="entry name" value="MGS-like_dom"/>
</dbReference>
<dbReference type="InterPro" id="IPR036914">
    <property type="entry name" value="MGS-like_dom_sf"/>
</dbReference>
<dbReference type="InterPro" id="IPR002695">
    <property type="entry name" value="PurH-like"/>
</dbReference>
<dbReference type="NCBIfam" id="NF002049">
    <property type="entry name" value="PRK00881.1"/>
    <property type="match status" value="1"/>
</dbReference>
<dbReference type="NCBIfam" id="TIGR00355">
    <property type="entry name" value="purH"/>
    <property type="match status" value="1"/>
</dbReference>
<dbReference type="PANTHER" id="PTHR11692:SF0">
    <property type="entry name" value="BIFUNCTIONAL PURINE BIOSYNTHESIS PROTEIN ATIC"/>
    <property type="match status" value="1"/>
</dbReference>
<dbReference type="PANTHER" id="PTHR11692">
    <property type="entry name" value="BIFUNCTIONAL PURINE BIOSYNTHESIS PROTEIN PURH"/>
    <property type="match status" value="1"/>
</dbReference>
<dbReference type="Pfam" id="PF01808">
    <property type="entry name" value="AICARFT_IMPCHas"/>
    <property type="match status" value="1"/>
</dbReference>
<dbReference type="Pfam" id="PF02142">
    <property type="entry name" value="MGS"/>
    <property type="match status" value="1"/>
</dbReference>
<dbReference type="PIRSF" id="PIRSF000414">
    <property type="entry name" value="AICARFT_IMPCHas"/>
    <property type="match status" value="1"/>
</dbReference>
<dbReference type="SMART" id="SM00798">
    <property type="entry name" value="AICARFT_IMPCHas"/>
    <property type="match status" value="1"/>
</dbReference>
<dbReference type="SMART" id="SM00851">
    <property type="entry name" value="MGS"/>
    <property type="match status" value="1"/>
</dbReference>
<dbReference type="SUPFAM" id="SSF53927">
    <property type="entry name" value="Cytidine deaminase-like"/>
    <property type="match status" value="1"/>
</dbReference>
<dbReference type="SUPFAM" id="SSF52335">
    <property type="entry name" value="Methylglyoxal synthase-like"/>
    <property type="match status" value="1"/>
</dbReference>
<dbReference type="PROSITE" id="PS51855">
    <property type="entry name" value="MGS"/>
    <property type="match status" value="1"/>
</dbReference>
<accession>Q8Y232</accession>
<reference key="1">
    <citation type="journal article" date="2002" name="Nature">
        <title>Genome sequence of the plant pathogen Ralstonia solanacearum.</title>
        <authorList>
            <person name="Salanoubat M."/>
            <person name="Genin S."/>
            <person name="Artiguenave F."/>
            <person name="Gouzy J."/>
            <person name="Mangenot S."/>
            <person name="Arlat M."/>
            <person name="Billault A."/>
            <person name="Brottier P."/>
            <person name="Camus J.-C."/>
            <person name="Cattolico L."/>
            <person name="Chandler M."/>
            <person name="Choisne N."/>
            <person name="Claudel-Renard C."/>
            <person name="Cunnac S."/>
            <person name="Demange N."/>
            <person name="Gaspin C."/>
            <person name="Lavie M."/>
            <person name="Moisan A."/>
            <person name="Robert C."/>
            <person name="Saurin W."/>
            <person name="Schiex T."/>
            <person name="Siguier P."/>
            <person name="Thebault P."/>
            <person name="Whalen M."/>
            <person name="Wincker P."/>
            <person name="Levy M."/>
            <person name="Weissenbach J."/>
            <person name="Boucher C.A."/>
        </authorList>
    </citation>
    <scope>NUCLEOTIDE SEQUENCE [LARGE SCALE GENOMIC DNA]</scope>
    <source>
        <strain>ATCC BAA-1114 / GMI1000</strain>
    </source>
</reference>
<comment type="catalytic activity">
    <reaction evidence="1">
        <text>(6R)-10-formyltetrahydrofolate + 5-amino-1-(5-phospho-beta-D-ribosyl)imidazole-4-carboxamide = 5-formamido-1-(5-phospho-D-ribosyl)imidazole-4-carboxamide + (6S)-5,6,7,8-tetrahydrofolate</text>
        <dbReference type="Rhea" id="RHEA:22192"/>
        <dbReference type="ChEBI" id="CHEBI:57453"/>
        <dbReference type="ChEBI" id="CHEBI:58467"/>
        <dbReference type="ChEBI" id="CHEBI:58475"/>
        <dbReference type="ChEBI" id="CHEBI:195366"/>
        <dbReference type="EC" id="2.1.2.3"/>
    </reaction>
</comment>
<comment type="catalytic activity">
    <reaction evidence="1">
        <text>IMP + H2O = 5-formamido-1-(5-phospho-D-ribosyl)imidazole-4-carboxamide</text>
        <dbReference type="Rhea" id="RHEA:18445"/>
        <dbReference type="ChEBI" id="CHEBI:15377"/>
        <dbReference type="ChEBI" id="CHEBI:58053"/>
        <dbReference type="ChEBI" id="CHEBI:58467"/>
        <dbReference type="EC" id="3.5.4.10"/>
    </reaction>
</comment>
<comment type="pathway">
    <text evidence="1">Purine metabolism; IMP biosynthesis via de novo pathway; 5-formamido-1-(5-phospho-D-ribosyl)imidazole-4-carboxamide from 5-amino-1-(5-phospho-D-ribosyl)imidazole-4-carboxamide (10-formyl THF route): step 1/1.</text>
</comment>
<comment type="pathway">
    <text evidence="1">Purine metabolism; IMP biosynthesis via de novo pathway; IMP from 5-formamido-1-(5-phospho-D-ribosyl)imidazole-4-carboxamide: step 1/1.</text>
</comment>
<comment type="domain">
    <text evidence="1">The IMP cyclohydrolase activity resides in the N-terminal region.</text>
</comment>
<comment type="similarity">
    <text evidence="1">Belongs to the PurH family.</text>
</comment>
<proteinExistence type="inferred from homology"/>
<organism>
    <name type="scientific">Ralstonia nicotianae (strain ATCC BAA-1114 / GMI1000)</name>
    <name type="common">Ralstonia solanacearum</name>
    <dbReference type="NCBI Taxonomy" id="267608"/>
    <lineage>
        <taxon>Bacteria</taxon>
        <taxon>Pseudomonadati</taxon>
        <taxon>Pseudomonadota</taxon>
        <taxon>Betaproteobacteria</taxon>
        <taxon>Burkholderiales</taxon>
        <taxon>Burkholderiaceae</taxon>
        <taxon>Ralstonia</taxon>
        <taxon>Ralstonia solanacearum species complex</taxon>
    </lineage>
</organism>
<protein>
    <recommendedName>
        <fullName evidence="1">Bifunctional purine biosynthesis protein PurH</fullName>
    </recommendedName>
    <domain>
        <recommendedName>
            <fullName evidence="1">Phosphoribosylaminoimidazolecarboxamide formyltransferase</fullName>
            <ecNumber evidence="1">2.1.2.3</ecNumber>
        </recommendedName>
        <alternativeName>
            <fullName evidence="1">AICAR transformylase</fullName>
        </alternativeName>
    </domain>
    <domain>
        <recommendedName>
            <fullName evidence="1">IMP cyclohydrolase</fullName>
            <ecNumber evidence="1">3.5.4.10</ecNumber>
        </recommendedName>
        <alternativeName>
            <fullName evidence="1">ATIC</fullName>
        </alternativeName>
        <alternativeName>
            <fullName evidence="1">IMP synthase</fullName>
        </alternativeName>
        <alternativeName>
            <fullName evidence="1">Inosinicase</fullName>
        </alternativeName>
    </domain>
</protein>
<feature type="chain" id="PRO_0000192115" description="Bifunctional purine biosynthesis protein PurH">
    <location>
        <begin position="1"/>
        <end position="524"/>
    </location>
</feature>
<feature type="domain" description="MGS-like" evidence="2">
    <location>
        <begin position="1"/>
        <end position="145"/>
    </location>
</feature>
<sequence length="524" mass="55847">MIQQALLSVSDKTGIVDFARALHGAGVKLLSTGGTAKLLAESGLPVTEVADYTGFPEMLDGRVKTLHPKVHGGILARRDLPEHMAALSQHGIPTIDLLVVNLYPFQQTVAKDECTLADAIENIDIGGPTMLRSAAKNHRDVTVIVDPADYATVLAEMQANGNTVGYDTNFMLAKKVFAHTAQYDGAITNYLTSLGQDKSHSTRSQYPQTLNLAFEQVQEMRYGENPHQSAAFYRDLKAVDGALANYAQLQGKELSYNNIADADAAWECVKSFDPAKGAACVIIKHANPCGVAIGGTAQEAYEKAFKTDSTSAFGGIIAFNVPLDEAAAQVVAKQFVEVLIAPSFSAGARTVFAAKQNVRLLEIPLGKGVNAYDFKRVGGGLLVQSPDAKNVQSAELRVVTKRHPTPKEMDDLLFAWRVAKFVKSNAIVFCGGGMTLGVGAGQMSRVDSARIASIKAQNAGLMLSGSAVASDAFFPFRDGLDVVVDAGASCVIQPGGSVRDDEVIAAADERNVAMIFTGTRHFRH</sequence>